<comment type="function">
    <text evidence="1">Component of the cytochrome c oxidase, the last enzyme in the mitochondrial electron transport chain which drives oxidative phosphorylation. The respiratory chain contains 3 multisubunit complexes succinate dehydrogenase (complex II, CII), ubiquinol-cytochrome c oxidoreductase (cytochrome b-c1 complex, complex III, CIII) and cytochrome c oxidase (complex IV, CIV), that cooperate to transfer electrons derived from NADH and succinate to molecular oxygen, creating an electrochemical gradient over the inner membrane that drives transmembrane transport and the ATP synthase. Cytochrome c oxidase is the component of the respiratory chain that catalyzes the reduction of oxygen to water. Electrons originating from reduced cytochrome c in the intermembrane space (IMS) are transferred via the dinuclear copper A center (CU(A)) of Cox2 and heme A of Cox1 to the active site in Cox1, a binuclear center (BNC) formed by heme A3 and copper B (CU(B)). The BNC reduces molecular oxygen to 2 water molecules using 4 electrons from cytochrome c in the IMS and 4 protons from the mitochondrial matrix.</text>
</comment>
<comment type="pathway">
    <text evidence="1">Energy metabolism; oxidative phosphorylation.</text>
</comment>
<comment type="subunit">
    <text evidence="2 3">Component of the cytochrome c oxidase (complex IV, CIV), a multisubunit enzyme composed of 11 subunits. The complex is composed of a catalytic core of 3 subunits Cox1, Cox2 and Cox3, encoded in the mitochondrial DNA, and 8 supernumerary subunits Cox4, Cox5a/Cox5, Cox6, Cox7, Cox8, Cox7a/Cox9, Cox6b/Cox12 and Cox6a/Cox13, which are encoded in the nuclear genome (PubMed:31316820). The complex exists as a monomer or a dimer and forms respiratory supercomplexes (SCs) in the inner mitochondrial membrane with NADH-ubiquinone oxidoreductase (complex I, CI) and ubiquinol-cytochrome c oxidoreductase (cytochrome b-c1 complex, complex III, CIII), resulting in various different assemblies (supercomplexes I(1)IV(1), I(1)III(3)IV(2), III(2)IV(1) and III(2)IV(2) as well as larger supercomplexes of compositions like I(1)III(2)IV(5-6)) (PubMed:17873079).</text>
</comment>
<comment type="subcellular location">
    <subcellularLocation>
        <location evidence="3">Mitochondrion inner membrane</location>
        <topology evidence="3">Single-pass membrane protein</topology>
    </subcellularLocation>
</comment>
<comment type="similarity">
    <text evidence="5">Belongs to the fungal cytochrome c oxidase subunit 7a family.</text>
</comment>
<gene>
    <name type="primary">cox-17</name>
    <name type="ORF">NCU05816</name>
</gene>
<proteinExistence type="evidence at protein level"/>
<keyword id="KW-0472">Membrane</keyword>
<keyword id="KW-0496">Mitochondrion</keyword>
<keyword id="KW-0999">Mitochondrion inner membrane</keyword>
<keyword id="KW-0560">Oxidoreductase</keyword>
<keyword id="KW-1185">Reference proteome</keyword>
<keyword id="KW-0812">Transmembrane</keyword>
<keyword id="KW-1133">Transmembrane helix</keyword>
<feature type="chain" id="PRO_0000448905" description="Cytochrome c oxidase subunit 9, mitochondrial">
    <location>
        <begin position="1"/>
        <end position="64"/>
    </location>
</feature>
<feature type="topological domain" description="Mitochondrial matrix" evidence="3">
    <location>
        <begin position="1"/>
        <end position="15"/>
    </location>
</feature>
<feature type="transmembrane region" description="Helical" evidence="3">
    <location>
        <begin position="16"/>
        <end position="36"/>
    </location>
</feature>
<feature type="topological domain" description="Mitochondrial intermembrane" evidence="3">
    <location>
        <begin position="37"/>
        <end position="64"/>
    </location>
</feature>
<protein>
    <recommendedName>
        <fullName>Cytochrome c oxidase subunit 9, mitochondrial</fullName>
    </recommendedName>
    <alternativeName>
        <fullName>Cytochrome c oxidase polypeptide VIIA</fullName>
    </alternativeName>
    <alternativeName>
        <fullName evidence="4">Cytochrome c oxidase subunit Cox7a</fullName>
    </alternativeName>
</protein>
<organism>
    <name type="scientific">Neurospora crassa (strain ATCC 24698 / 74-OR23-1A / CBS 708.71 / DSM 1257 / FGSC 987)</name>
    <dbReference type="NCBI Taxonomy" id="367110"/>
    <lineage>
        <taxon>Eukaryota</taxon>
        <taxon>Fungi</taxon>
        <taxon>Dikarya</taxon>
        <taxon>Ascomycota</taxon>
        <taxon>Pezizomycotina</taxon>
        <taxon>Sordariomycetes</taxon>
        <taxon>Sordariomycetidae</taxon>
        <taxon>Sordariales</taxon>
        <taxon>Sordariaceae</taxon>
        <taxon>Neurospora</taxon>
    </lineage>
</organism>
<name>COX9_NEUCR</name>
<accession>Q7S5M7</accession>
<evidence type="ECO:0000250" key="1">
    <source>
        <dbReference type="UniProtKB" id="P07255"/>
    </source>
</evidence>
<evidence type="ECO:0000269" key="2">
    <source>
    </source>
</evidence>
<evidence type="ECO:0000269" key="3">
    <source>
    </source>
</evidence>
<evidence type="ECO:0000303" key="4">
    <source>
    </source>
</evidence>
<evidence type="ECO:0000305" key="5"/>
<sequence>MAATAVRPITGMLRRGLILDIGIALGVGFVMANGYWYGYHMPRTNARDNYYKKLEEERAARMGA</sequence>
<reference key="1">
    <citation type="journal article" date="2003" name="Nature">
        <title>The genome sequence of the filamentous fungus Neurospora crassa.</title>
        <authorList>
            <person name="Galagan J.E."/>
            <person name="Calvo S.E."/>
            <person name="Borkovich K.A."/>
            <person name="Selker E.U."/>
            <person name="Read N.D."/>
            <person name="Jaffe D.B."/>
            <person name="FitzHugh W."/>
            <person name="Ma L.-J."/>
            <person name="Smirnov S."/>
            <person name="Purcell S."/>
            <person name="Rehman B."/>
            <person name="Elkins T."/>
            <person name="Engels R."/>
            <person name="Wang S."/>
            <person name="Nielsen C.B."/>
            <person name="Butler J."/>
            <person name="Endrizzi M."/>
            <person name="Qui D."/>
            <person name="Ianakiev P."/>
            <person name="Bell-Pedersen D."/>
            <person name="Nelson M.A."/>
            <person name="Werner-Washburne M."/>
            <person name="Selitrennikoff C.P."/>
            <person name="Kinsey J.A."/>
            <person name="Braun E.L."/>
            <person name="Zelter A."/>
            <person name="Schulte U."/>
            <person name="Kothe G.O."/>
            <person name="Jedd G."/>
            <person name="Mewes H.-W."/>
            <person name="Staben C."/>
            <person name="Marcotte E."/>
            <person name="Greenberg D."/>
            <person name="Roy A."/>
            <person name="Foley K."/>
            <person name="Naylor J."/>
            <person name="Stange-Thomann N."/>
            <person name="Barrett R."/>
            <person name="Gnerre S."/>
            <person name="Kamal M."/>
            <person name="Kamvysselis M."/>
            <person name="Mauceli E.W."/>
            <person name="Bielke C."/>
            <person name="Rudd S."/>
            <person name="Frishman D."/>
            <person name="Krystofova S."/>
            <person name="Rasmussen C."/>
            <person name="Metzenberg R.L."/>
            <person name="Perkins D.D."/>
            <person name="Kroken S."/>
            <person name="Cogoni C."/>
            <person name="Macino G."/>
            <person name="Catcheside D.E.A."/>
            <person name="Li W."/>
            <person name="Pratt R.J."/>
            <person name="Osmani S.A."/>
            <person name="DeSouza C.P.C."/>
            <person name="Glass N.L."/>
            <person name="Orbach M.J."/>
            <person name="Berglund J.A."/>
            <person name="Voelker R."/>
            <person name="Yarden O."/>
            <person name="Plamann M."/>
            <person name="Seiler S."/>
            <person name="Dunlap J.C."/>
            <person name="Radford A."/>
            <person name="Aramayo R."/>
            <person name="Natvig D.O."/>
            <person name="Alex L.A."/>
            <person name="Mannhaupt G."/>
            <person name="Ebbole D.J."/>
            <person name="Freitag M."/>
            <person name="Paulsen I."/>
            <person name="Sachs M.S."/>
            <person name="Lander E.S."/>
            <person name="Nusbaum C."/>
            <person name="Birren B.W."/>
        </authorList>
    </citation>
    <scope>NUCLEOTIDE SEQUENCE [LARGE SCALE GENOMIC DNA]</scope>
    <source>
        <strain>ATCC 24698 / 74-OR23-1A / CBS 708.71 / DSM 1257 / FGSC 987</strain>
    </source>
</reference>
<reference key="2">
    <citation type="journal article" date="2007" name="Eukaryot. Cell">
        <title>Supramolecular organization of the respiratory chain in Neurospora crassa mitochondria.</title>
        <authorList>
            <person name="Marques I."/>
            <person name="Dencher N.A."/>
            <person name="Videira A."/>
            <person name="Krause F."/>
        </authorList>
    </citation>
    <scope>COMPOSITION OF THE CYTOCHROME C OXIDASE COMPLEX</scope>
</reference>
<reference key="3">
    <citation type="journal article" date="2019" name="IUCrJ">
        <title>Cryo-EM structure of Neurospora crassa respiratory complex IV.</title>
        <authorList>
            <person name="Bausewein T."/>
            <person name="Nussberger S."/>
            <person name="Kuehlbrandt W."/>
        </authorList>
    </citation>
    <scope>STRUCTURE BY ELECTRON MICROSCOPY (5.5 ANGSTROMS)</scope>
    <scope>SUBUNIT</scope>
</reference>
<dbReference type="EMBL" id="CM002242">
    <property type="protein sequence ID" value="EAA30840.1"/>
    <property type="molecule type" value="Genomic_DNA"/>
</dbReference>
<dbReference type="RefSeq" id="XP_960076.1">
    <property type="nucleotide sequence ID" value="XM_954983.3"/>
</dbReference>
<dbReference type="SMR" id="Q7S5M7"/>
<dbReference type="FunCoup" id="Q7S5M7">
    <property type="interactions" value="87"/>
</dbReference>
<dbReference type="STRING" id="367110.Q7S5M7"/>
<dbReference type="PaxDb" id="5141-EFNCRP00000005784"/>
<dbReference type="EnsemblFungi" id="EAA30840">
    <property type="protein sequence ID" value="EAA30840"/>
    <property type="gene ID" value="NCU05816"/>
</dbReference>
<dbReference type="GeneID" id="3876223"/>
<dbReference type="KEGG" id="ncr:NCU05816"/>
<dbReference type="VEuPathDB" id="FungiDB:NCU05816"/>
<dbReference type="HOGENOM" id="CLU_196969_0_0_1"/>
<dbReference type="InParanoid" id="Q7S5M7"/>
<dbReference type="OMA" id="ASYWWWG"/>
<dbReference type="OrthoDB" id="2317211at2759"/>
<dbReference type="UniPathway" id="UPA00705"/>
<dbReference type="Proteomes" id="UP000001805">
    <property type="component" value="Chromosome 7, Linkage Group VII"/>
</dbReference>
<dbReference type="GO" id="GO:0005743">
    <property type="term" value="C:mitochondrial inner membrane"/>
    <property type="evidence" value="ECO:0007669"/>
    <property type="project" value="UniProtKB-SubCell"/>
</dbReference>
<dbReference type="GO" id="GO:0016491">
    <property type="term" value="F:oxidoreductase activity"/>
    <property type="evidence" value="ECO:0007669"/>
    <property type="project" value="UniProtKB-KW"/>
</dbReference>
<dbReference type="GO" id="GO:0006123">
    <property type="term" value="P:mitochondrial electron transport, cytochrome c to oxygen"/>
    <property type="evidence" value="ECO:0000318"/>
    <property type="project" value="GO_Central"/>
</dbReference>
<dbReference type="GO" id="GO:1902600">
    <property type="term" value="P:proton transmembrane transport"/>
    <property type="evidence" value="ECO:0007669"/>
    <property type="project" value="GOC"/>
</dbReference>
<dbReference type="CDD" id="cd22888">
    <property type="entry name" value="CcO_VIIa_fungal"/>
    <property type="match status" value="1"/>
</dbReference>
<dbReference type="InterPro" id="IPR014368">
    <property type="entry name" value="Cyt_c_oxidase_su7a_fun"/>
</dbReference>
<dbReference type="PANTHER" id="PTHR28264:SF1">
    <property type="entry name" value="CYTOCHROME C OXIDASE SUBUNIT 6C"/>
    <property type="match status" value="1"/>
</dbReference>
<dbReference type="PANTHER" id="PTHR28264">
    <property type="entry name" value="CYTOCHROME C OXIDASE SUBUNIT 7A"/>
    <property type="match status" value="1"/>
</dbReference>
<dbReference type="PIRSF" id="PIRSF000283">
    <property type="entry name" value="COX9"/>
    <property type="match status" value="1"/>
</dbReference>